<feature type="chain" id="PRO_1000164529" description="Cell division protein SepF">
    <location>
        <begin position="1"/>
        <end position="159"/>
    </location>
</feature>
<feature type="region of interest" description="Disordered" evidence="2">
    <location>
        <begin position="23"/>
        <end position="69"/>
    </location>
</feature>
<feature type="compositionally biased region" description="Low complexity" evidence="2">
    <location>
        <begin position="44"/>
        <end position="64"/>
    </location>
</feature>
<keyword id="KW-0131">Cell cycle</keyword>
<keyword id="KW-0132">Cell division</keyword>
<keyword id="KW-0963">Cytoplasm</keyword>
<keyword id="KW-0717">Septation</keyword>
<gene>
    <name evidence="1" type="primary">sepF</name>
    <name type="ordered locus">Blon_0801</name>
    <name type="ordered locus">BLIJ_0816</name>
</gene>
<evidence type="ECO:0000255" key="1">
    <source>
        <dbReference type="HAMAP-Rule" id="MF_01197"/>
    </source>
</evidence>
<evidence type="ECO:0000256" key="2">
    <source>
        <dbReference type="SAM" id="MobiDB-lite"/>
    </source>
</evidence>
<reference key="1">
    <citation type="journal article" date="2008" name="Proc. Natl. Acad. Sci. U.S.A.">
        <title>The genome sequence of Bifidobacterium longum subsp. infantis reveals adaptations for milk utilization within the infant microbiome.</title>
        <authorList>
            <person name="Sela D.A."/>
            <person name="Chapman J."/>
            <person name="Adeuya A."/>
            <person name="Kim J.H."/>
            <person name="Chen F."/>
            <person name="Whitehead T.R."/>
            <person name="Lapidus A."/>
            <person name="Rokhsar D.S."/>
            <person name="Lebrilla C.B."/>
            <person name="German J.B."/>
            <person name="Price N.P."/>
            <person name="Richardson P.M."/>
            <person name="Mills D.A."/>
        </authorList>
    </citation>
    <scope>NUCLEOTIDE SEQUENCE [LARGE SCALE GENOMIC DNA]</scope>
    <source>
        <strain>ATCC 15697 / DSM 20088 / JCM 1222 / NCTC 11817 / S12</strain>
    </source>
</reference>
<reference key="2">
    <citation type="journal article" date="2011" name="Nature">
        <title>Bifidobacteria can protect from enteropathogenic infection through production of acetate.</title>
        <authorList>
            <person name="Fukuda S."/>
            <person name="Toh H."/>
            <person name="Hase K."/>
            <person name="Oshima K."/>
            <person name="Nakanishi Y."/>
            <person name="Yoshimura K."/>
            <person name="Tobe T."/>
            <person name="Clarke J.M."/>
            <person name="Topping D.L."/>
            <person name="Suzuki T."/>
            <person name="Taylor T.D."/>
            <person name="Itoh K."/>
            <person name="Kikuchi J."/>
            <person name="Morita H."/>
            <person name="Hattori M."/>
            <person name="Ohno H."/>
        </authorList>
    </citation>
    <scope>NUCLEOTIDE SEQUENCE [LARGE SCALE GENOMIC DNA]</scope>
    <source>
        <strain>ATCC 15697 / DSM 20088 / JCM 1222 / NCTC 11817 / S12</strain>
    </source>
</reference>
<accession>B7GQ24</accession>
<accession>E8MQY3</accession>
<protein>
    <recommendedName>
        <fullName evidence="1">Cell division protein SepF</fullName>
    </recommendedName>
</protein>
<organism>
    <name type="scientific">Bifidobacterium longum subsp. infantis (strain ATCC 15697 / DSM 20088 / JCM 1222 / NCTC 11817 / S12)</name>
    <dbReference type="NCBI Taxonomy" id="391904"/>
    <lineage>
        <taxon>Bacteria</taxon>
        <taxon>Bacillati</taxon>
        <taxon>Actinomycetota</taxon>
        <taxon>Actinomycetes</taxon>
        <taxon>Bifidobacteriales</taxon>
        <taxon>Bifidobacteriaceae</taxon>
        <taxon>Bifidobacterium</taxon>
    </lineage>
</organism>
<proteinExistence type="inferred from homology"/>
<sequence length="159" mass="17056">MAGFMKNAMSYLGMSDVVDDEDDYIEEDEEQKPASKSAFDSDHTVTPLASTTAPAASSTTKPFPGGRVNRITTIHPKSYEDAQLVGRALRDGVPVVLNLTGVAEAVAYRIVDFSAGVVFGVRGSLERVTPRVFLLSPAQVNIKVEEPTKPASAHDLFAD</sequence>
<comment type="function">
    <text evidence="1">Cell division protein that is part of the divisome complex and is recruited early to the Z-ring. Probably stimulates Z-ring formation, perhaps through the cross-linking of FtsZ protofilaments. Its function overlaps with FtsA.</text>
</comment>
<comment type="subunit">
    <text evidence="1">Homodimer. Interacts with FtsZ.</text>
</comment>
<comment type="subcellular location">
    <subcellularLocation>
        <location evidence="1">Cytoplasm</location>
    </subcellularLocation>
    <text evidence="1">Localizes to the division site, in a FtsZ-dependent manner.</text>
</comment>
<comment type="similarity">
    <text evidence="1">Belongs to the SepF family.</text>
</comment>
<dbReference type="EMBL" id="CP001095">
    <property type="protein sequence ID" value="ACJ51904.1"/>
    <property type="molecule type" value="Genomic_DNA"/>
</dbReference>
<dbReference type="EMBL" id="AP010889">
    <property type="protein sequence ID" value="BAJ68408.1"/>
    <property type="molecule type" value="Genomic_DNA"/>
</dbReference>
<dbReference type="RefSeq" id="WP_007053320.1">
    <property type="nucleotide sequence ID" value="NZ_JDTT01000007.1"/>
</dbReference>
<dbReference type="SMR" id="B7GQ24"/>
<dbReference type="KEGG" id="bln:Blon_0801"/>
<dbReference type="KEGG" id="blon:BLIJ_0816"/>
<dbReference type="PATRIC" id="fig|391904.8.peg.823"/>
<dbReference type="HOGENOM" id="CLU_078499_0_2_11"/>
<dbReference type="Proteomes" id="UP000001360">
    <property type="component" value="Chromosome"/>
</dbReference>
<dbReference type="GO" id="GO:0005737">
    <property type="term" value="C:cytoplasm"/>
    <property type="evidence" value="ECO:0007669"/>
    <property type="project" value="UniProtKB-SubCell"/>
</dbReference>
<dbReference type="GO" id="GO:0000917">
    <property type="term" value="P:division septum assembly"/>
    <property type="evidence" value="ECO:0007669"/>
    <property type="project" value="UniProtKB-KW"/>
</dbReference>
<dbReference type="GO" id="GO:0043093">
    <property type="term" value="P:FtsZ-dependent cytokinesis"/>
    <property type="evidence" value="ECO:0007669"/>
    <property type="project" value="UniProtKB-UniRule"/>
</dbReference>
<dbReference type="Gene3D" id="3.30.110.150">
    <property type="entry name" value="SepF-like protein"/>
    <property type="match status" value="1"/>
</dbReference>
<dbReference type="HAMAP" id="MF_01197">
    <property type="entry name" value="SepF"/>
    <property type="match status" value="1"/>
</dbReference>
<dbReference type="InterPro" id="IPR023052">
    <property type="entry name" value="Cell_div_SepF"/>
</dbReference>
<dbReference type="InterPro" id="IPR007561">
    <property type="entry name" value="Cell_div_SepF/SepF-rel"/>
</dbReference>
<dbReference type="InterPro" id="IPR038594">
    <property type="entry name" value="SepF-like_sf"/>
</dbReference>
<dbReference type="PANTHER" id="PTHR35798">
    <property type="entry name" value="CELL DIVISION PROTEIN SEPF"/>
    <property type="match status" value="1"/>
</dbReference>
<dbReference type="PANTHER" id="PTHR35798:SF1">
    <property type="entry name" value="CELL DIVISION PROTEIN SEPF"/>
    <property type="match status" value="1"/>
</dbReference>
<dbReference type="Pfam" id="PF04472">
    <property type="entry name" value="SepF"/>
    <property type="match status" value="1"/>
</dbReference>
<name>SEPF_BIFLS</name>